<gene>
    <name evidence="1" type="primary">folE2</name>
    <name type="ordered locus">BH0998</name>
</gene>
<accession>Q9KE60</accession>
<comment type="function">
    <text evidence="1">Converts GTP to 7,8-dihydroneopterin triphosphate.</text>
</comment>
<comment type="catalytic activity">
    <reaction evidence="1">
        <text>GTP + H2O = 7,8-dihydroneopterin 3'-triphosphate + formate + H(+)</text>
        <dbReference type="Rhea" id="RHEA:17473"/>
        <dbReference type="ChEBI" id="CHEBI:15377"/>
        <dbReference type="ChEBI" id="CHEBI:15378"/>
        <dbReference type="ChEBI" id="CHEBI:15740"/>
        <dbReference type="ChEBI" id="CHEBI:37565"/>
        <dbReference type="ChEBI" id="CHEBI:58462"/>
        <dbReference type="EC" id="3.5.4.16"/>
    </reaction>
</comment>
<comment type="pathway">
    <text evidence="1">Cofactor biosynthesis; 7,8-dihydroneopterin triphosphate biosynthesis; 7,8-dihydroneopterin triphosphate from GTP: step 1/1.</text>
</comment>
<comment type="similarity">
    <text evidence="1">Belongs to the GTP cyclohydrolase IV family.</text>
</comment>
<keyword id="KW-0378">Hydrolase</keyword>
<keyword id="KW-1185">Reference proteome</keyword>
<organism>
    <name type="scientific">Halalkalibacterium halodurans (strain ATCC BAA-125 / DSM 18197 / FERM 7344 / JCM 9153 / C-125)</name>
    <name type="common">Bacillus halodurans</name>
    <dbReference type="NCBI Taxonomy" id="272558"/>
    <lineage>
        <taxon>Bacteria</taxon>
        <taxon>Bacillati</taxon>
        <taxon>Bacillota</taxon>
        <taxon>Bacilli</taxon>
        <taxon>Bacillales</taxon>
        <taxon>Bacillaceae</taxon>
        <taxon>Halalkalibacterium (ex Joshi et al. 2022)</taxon>
    </lineage>
</organism>
<feature type="chain" id="PRO_0000147699" description="GTP cyclohydrolase FolE2">
    <location>
        <begin position="1"/>
        <end position="299"/>
    </location>
</feature>
<feature type="region of interest" description="Disordered" evidence="2">
    <location>
        <begin position="1"/>
        <end position="25"/>
    </location>
</feature>
<feature type="site" description="May be catalytically important" evidence="1">
    <location>
        <position position="182"/>
    </location>
</feature>
<reference key="1">
    <citation type="journal article" date="2000" name="Nucleic Acids Res.">
        <title>Complete genome sequence of the alkaliphilic bacterium Bacillus halodurans and genomic sequence comparison with Bacillus subtilis.</title>
        <authorList>
            <person name="Takami H."/>
            <person name="Nakasone K."/>
            <person name="Takaki Y."/>
            <person name="Maeno G."/>
            <person name="Sasaki R."/>
            <person name="Masui N."/>
            <person name="Fuji F."/>
            <person name="Hirama C."/>
            <person name="Nakamura Y."/>
            <person name="Ogasawara N."/>
            <person name="Kuhara S."/>
            <person name="Horikoshi K."/>
        </authorList>
    </citation>
    <scope>NUCLEOTIDE SEQUENCE [LARGE SCALE GENOMIC DNA]</scope>
    <source>
        <strain>ATCC BAA-125 / DSM 18197 / FERM 7344 / JCM 9153 / C-125</strain>
    </source>
</reference>
<sequence length="299" mass="33899">MKTKQWPSKTERHKRFGSVPPVAGKKPIHKEEMADLQNMPNDFLFALDSVGIHNVKHPCIIQSNLKPYEQTTVGTFSLTTGLEQMSKGINMSRLTELLQEYHQTGFILSLKNMQAFTKDLAERMEQSSAHVHVTFPWFFERESPSLNKIGLAHAEARLNVHFDETLGFTHEVGLTAAVTTLCPCSKEISEYSAHNQRGYVTIKATFYEPTEGSDDWKVTLLEAAESNASSILYPVLKRPDEKAVTEKAYENPRFVEDMVRLTAADLYENETIKAFTVECRNEESIHQHDAIATLSYSKK</sequence>
<proteinExistence type="inferred from homology"/>
<dbReference type="EC" id="3.5.4.16" evidence="1"/>
<dbReference type="EMBL" id="BA000004">
    <property type="protein sequence ID" value="BAB04717.1"/>
    <property type="molecule type" value="Genomic_DNA"/>
</dbReference>
<dbReference type="PIR" id="F83774">
    <property type="entry name" value="F83774"/>
</dbReference>
<dbReference type="RefSeq" id="WP_010897168.1">
    <property type="nucleotide sequence ID" value="NC_002570.2"/>
</dbReference>
<dbReference type="SMR" id="Q9KE60"/>
<dbReference type="STRING" id="272558.gene:10726892"/>
<dbReference type="KEGG" id="bha:BH0998"/>
<dbReference type="eggNOG" id="COG1469">
    <property type="taxonomic scope" value="Bacteria"/>
</dbReference>
<dbReference type="HOGENOM" id="CLU_062816_1_1_9"/>
<dbReference type="OrthoDB" id="9774824at2"/>
<dbReference type="UniPathway" id="UPA00848">
    <property type="reaction ID" value="UER00151"/>
</dbReference>
<dbReference type="Proteomes" id="UP000001258">
    <property type="component" value="Chromosome"/>
</dbReference>
<dbReference type="GO" id="GO:0003934">
    <property type="term" value="F:GTP cyclohydrolase I activity"/>
    <property type="evidence" value="ECO:0007669"/>
    <property type="project" value="UniProtKB-UniRule"/>
</dbReference>
<dbReference type="GO" id="GO:0046654">
    <property type="term" value="P:tetrahydrofolate biosynthetic process"/>
    <property type="evidence" value="ECO:0007669"/>
    <property type="project" value="UniProtKB-UniRule"/>
</dbReference>
<dbReference type="Gene3D" id="3.10.270.10">
    <property type="entry name" value="Urate Oxidase"/>
    <property type="match status" value="1"/>
</dbReference>
<dbReference type="HAMAP" id="MF_01527_B">
    <property type="entry name" value="GTP_cyclohydrol_B"/>
    <property type="match status" value="1"/>
</dbReference>
<dbReference type="InterPro" id="IPR022838">
    <property type="entry name" value="GTP_cyclohydrolase_FolE2"/>
</dbReference>
<dbReference type="InterPro" id="IPR003801">
    <property type="entry name" value="GTP_cyclohydrolase_FolE2/MptA"/>
</dbReference>
<dbReference type="NCBIfam" id="NF010200">
    <property type="entry name" value="PRK13674.1-1"/>
    <property type="match status" value="1"/>
</dbReference>
<dbReference type="PANTHER" id="PTHR36445">
    <property type="entry name" value="GTP CYCLOHYDROLASE MPTA"/>
    <property type="match status" value="1"/>
</dbReference>
<dbReference type="PANTHER" id="PTHR36445:SF1">
    <property type="entry name" value="GTP CYCLOHYDROLASE MPTA"/>
    <property type="match status" value="1"/>
</dbReference>
<dbReference type="Pfam" id="PF02649">
    <property type="entry name" value="GCHY-1"/>
    <property type="match status" value="1"/>
</dbReference>
<name>GCH4_HALH5</name>
<protein>
    <recommendedName>
        <fullName evidence="1">GTP cyclohydrolase FolE2</fullName>
        <ecNumber evidence="1">3.5.4.16</ecNumber>
    </recommendedName>
</protein>
<evidence type="ECO:0000255" key="1">
    <source>
        <dbReference type="HAMAP-Rule" id="MF_01527"/>
    </source>
</evidence>
<evidence type="ECO:0000256" key="2">
    <source>
        <dbReference type="SAM" id="MobiDB-lite"/>
    </source>
</evidence>